<proteinExistence type="inferred from homology"/>
<evidence type="ECO:0000255" key="1">
    <source>
        <dbReference type="HAMAP-Rule" id="MF_01849"/>
    </source>
</evidence>
<evidence type="ECO:0000255" key="2">
    <source>
        <dbReference type="PROSITE-ProRule" id="PRU01266"/>
    </source>
</evidence>
<organism>
    <name type="scientific">Saccharophagus degradans (strain 2-40 / ATCC 43961 / DSM 17024)</name>
    <dbReference type="NCBI Taxonomy" id="203122"/>
    <lineage>
        <taxon>Bacteria</taxon>
        <taxon>Pseudomonadati</taxon>
        <taxon>Pseudomonadota</taxon>
        <taxon>Gammaproteobacteria</taxon>
        <taxon>Cellvibrionales</taxon>
        <taxon>Cellvibrionaceae</taxon>
        <taxon>Saccharophagus</taxon>
    </lineage>
</organism>
<dbReference type="EC" id="2.1.1.192" evidence="1"/>
<dbReference type="EMBL" id="CP000282">
    <property type="protein sequence ID" value="ABD80693.1"/>
    <property type="molecule type" value="Genomic_DNA"/>
</dbReference>
<dbReference type="RefSeq" id="WP_011467913.1">
    <property type="nucleotide sequence ID" value="NC_007912.1"/>
</dbReference>
<dbReference type="SMR" id="Q21KT6"/>
<dbReference type="STRING" id="203122.Sde_1431"/>
<dbReference type="GeneID" id="98613107"/>
<dbReference type="KEGG" id="sde:Sde_1431"/>
<dbReference type="eggNOG" id="COG0820">
    <property type="taxonomic scope" value="Bacteria"/>
</dbReference>
<dbReference type="HOGENOM" id="CLU_029101_0_0_6"/>
<dbReference type="OrthoDB" id="9793973at2"/>
<dbReference type="Proteomes" id="UP000001947">
    <property type="component" value="Chromosome"/>
</dbReference>
<dbReference type="GO" id="GO:0005737">
    <property type="term" value="C:cytoplasm"/>
    <property type="evidence" value="ECO:0007669"/>
    <property type="project" value="UniProtKB-SubCell"/>
</dbReference>
<dbReference type="GO" id="GO:0051539">
    <property type="term" value="F:4 iron, 4 sulfur cluster binding"/>
    <property type="evidence" value="ECO:0007669"/>
    <property type="project" value="UniProtKB-UniRule"/>
</dbReference>
<dbReference type="GO" id="GO:0046872">
    <property type="term" value="F:metal ion binding"/>
    <property type="evidence" value="ECO:0007669"/>
    <property type="project" value="UniProtKB-KW"/>
</dbReference>
<dbReference type="GO" id="GO:0070040">
    <property type="term" value="F:rRNA (adenine(2503)-C2-)-methyltransferase activity"/>
    <property type="evidence" value="ECO:0007669"/>
    <property type="project" value="UniProtKB-UniRule"/>
</dbReference>
<dbReference type="GO" id="GO:0019843">
    <property type="term" value="F:rRNA binding"/>
    <property type="evidence" value="ECO:0007669"/>
    <property type="project" value="UniProtKB-UniRule"/>
</dbReference>
<dbReference type="GO" id="GO:0002935">
    <property type="term" value="F:tRNA (adenine(37)-C2)-methyltransferase activity"/>
    <property type="evidence" value="ECO:0007669"/>
    <property type="project" value="UniProtKB-UniRule"/>
</dbReference>
<dbReference type="GO" id="GO:0000049">
    <property type="term" value="F:tRNA binding"/>
    <property type="evidence" value="ECO:0007669"/>
    <property type="project" value="UniProtKB-UniRule"/>
</dbReference>
<dbReference type="GO" id="GO:0070475">
    <property type="term" value="P:rRNA base methylation"/>
    <property type="evidence" value="ECO:0007669"/>
    <property type="project" value="UniProtKB-UniRule"/>
</dbReference>
<dbReference type="GO" id="GO:0030488">
    <property type="term" value="P:tRNA methylation"/>
    <property type="evidence" value="ECO:0007669"/>
    <property type="project" value="UniProtKB-UniRule"/>
</dbReference>
<dbReference type="CDD" id="cd01335">
    <property type="entry name" value="Radical_SAM"/>
    <property type="match status" value="1"/>
</dbReference>
<dbReference type="FunFam" id="1.10.150.530:FF:000003">
    <property type="entry name" value="Dual-specificity RNA methyltransferase RlmN"/>
    <property type="match status" value="1"/>
</dbReference>
<dbReference type="FunFam" id="3.20.20.70:FF:000008">
    <property type="entry name" value="Dual-specificity RNA methyltransferase RlmN"/>
    <property type="match status" value="1"/>
</dbReference>
<dbReference type="Gene3D" id="1.10.150.530">
    <property type="match status" value="1"/>
</dbReference>
<dbReference type="Gene3D" id="3.20.20.70">
    <property type="entry name" value="Aldolase class I"/>
    <property type="match status" value="1"/>
</dbReference>
<dbReference type="HAMAP" id="MF_01849">
    <property type="entry name" value="RNA_methyltr_RlmN"/>
    <property type="match status" value="1"/>
</dbReference>
<dbReference type="InterPro" id="IPR013785">
    <property type="entry name" value="Aldolase_TIM"/>
</dbReference>
<dbReference type="InterPro" id="IPR040072">
    <property type="entry name" value="Methyltransferase_A"/>
</dbReference>
<dbReference type="InterPro" id="IPR048641">
    <property type="entry name" value="RlmN_N"/>
</dbReference>
<dbReference type="InterPro" id="IPR027492">
    <property type="entry name" value="RNA_MTrfase_RlmN"/>
</dbReference>
<dbReference type="InterPro" id="IPR004383">
    <property type="entry name" value="rRNA_lsu_MTrfase_RlmN/Cfr"/>
</dbReference>
<dbReference type="InterPro" id="IPR007197">
    <property type="entry name" value="rSAM"/>
</dbReference>
<dbReference type="NCBIfam" id="TIGR00048">
    <property type="entry name" value="rRNA_mod_RlmN"/>
    <property type="match status" value="1"/>
</dbReference>
<dbReference type="PANTHER" id="PTHR30544">
    <property type="entry name" value="23S RRNA METHYLTRANSFERASE"/>
    <property type="match status" value="1"/>
</dbReference>
<dbReference type="PANTHER" id="PTHR30544:SF5">
    <property type="entry name" value="RADICAL SAM CORE DOMAIN-CONTAINING PROTEIN"/>
    <property type="match status" value="1"/>
</dbReference>
<dbReference type="Pfam" id="PF04055">
    <property type="entry name" value="Radical_SAM"/>
    <property type="match status" value="1"/>
</dbReference>
<dbReference type="Pfam" id="PF21016">
    <property type="entry name" value="RlmN_N"/>
    <property type="match status" value="1"/>
</dbReference>
<dbReference type="PIRSF" id="PIRSF006004">
    <property type="entry name" value="CHP00048"/>
    <property type="match status" value="1"/>
</dbReference>
<dbReference type="SFLD" id="SFLDF00275">
    <property type="entry name" value="adenosine_C2_methyltransferase"/>
    <property type="match status" value="1"/>
</dbReference>
<dbReference type="SFLD" id="SFLDG01062">
    <property type="entry name" value="methyltransferase_(Class_A)"/>
    <property type="match status" value="1"/>
</dbReference>
<dbReference type="SUPFAM" id="SSF102114">
    <property type="entry name" value="Radical SAM enzymes"/>
    <property type="match status" value="1"/>
</dbReference>
<dbReference type="PROSITE" id="PS51918">
    <property type="entry name" value="RADICAL_SAM"/>
    <property type="match status" value="1"/>
</dbReference>
<gene>
    <name evidence="1" type="primary">rlmN</name>
    <name type="ordered locus">Sde_1431</name>
</gene>
<reference key="1">
    <citation type="journal article" date="2008" name="PLoS Genet.">
        <title>Complete genome sequence of the complex carbohydrate-degrading marine bacterium, Saccharophagus degradans strain 2-40 T.</title>
        <authorList>
            <person name="Weiner R.M."/>
            <person name="Taylor L.E. II"/>
            <person name="Henrissat B."/>
            <person name="Hauser L."/>
            <person name="Land M."/>
            <person name="Coutinho P.M."/>
            <person name="Rancurel C."/>
            <person name="Saunders E.H."/>
            <person name="Longmire A.G."/>
            <person name="Zhang H."/>
            <person name="Bayer E.A."/>
            <person name="Gilbert H.J."/>
            <person name="Larimer F."/>
            <person name="Zhulin I.B."/>
            <person name="Ekborg N.A."/>
            <person name="Lamed R."/>
            <person name="Richardson P.M."/>
            <person name="Borovok I."/>
            <person name="Hutcheson S."/>
        </authorList>
    </citation>
    <scope>NUCLEOTIDE SEQUENCE [LARGE SCALE GENOMIC DNA]</scope>
    <source>
        <strain>2-40 / ATCC 43961 / DSM 17024</strain>
    </source>
</reference>
<comment type="function">
    <text evidence="1">Specifically methylates position 2 of adenine 2503 in 23S rRNA and position 2 of adenine 37 in tRNAs. m2A2503 modification seems to play a crucial role in the proofreading step occurring at the peptidyl transferase center and thus would serve to optimize ribosomal fidelity.</text>
</comment>
<comment type="catalytic activity">
    <reaction evidence="1">
        <text>adenosine(2503) in 23S rRNA + 2 reduced [2Fe-2S]-[ferredoxin] + 2 S-adenosyl-L-methionine = 2-methyladenosine(2503) in 23S rRNA + 5'-deoxyadenosine + L-methionine + 2 oxidized [2Fe-2S]-[ferredoxin] + S-adenosyl-L-homocysteine</text>
        <dbReference type="Rhea" id="RHEA:42916"/>
        <dbReference type="Rhea" id="RHEA-COMP:10000"/>
        <dbReference type="Rhea" id="RHEA-COMP:10001"/>
        <dbReference type="Rhea" id="RHEA-COMP:10152"/>
        <dbReference type="Rhea" id="RHEA-COMP:10282"/>
        <dbReference type="ChEBI" id="CHEBI:17319"/>
        <dbReference type="ChEBI" id="CHEBI:33737"/>
        <dbReference type="ChEBI" id="CHEBI:33738"/>
        <dbReference type="ChEBI" id="CHEBI:57844"/>
        <dbReference type="ChEBI" id="CHEBI:57856"/>
        <dbReference type="ChEBI" id="CHEBI:59789"/>
        <dbReference type="ChEBI" id="CHEBI:74411"/>
        <dbReference type="ChEBI" id="CHEBI:74497"/>
        <dbReference type="EC" id="2.1.1.192"/>
    </reaction>
</comment>
<comment type="catalytic activity">
    <reaction evidence="1">
        <text>adenosine(37) in tRNA + 2 reduced [2Fe-2S]-[ferredoxin] + 2 S-adenosyl-L-methionine = 2-methyladenosine(37) in tRNA + 5'-deoxyadenosine + L-methionine + 2 oxidized [2Fe-2S]-[ferredoxin] + S-adenosyl-L-homocysteine</text>
        <dbReference type="Rhea" id="RHEA:43332"/>
        <dbReference type="Rhea" id="RHEA-COMP:10000"/>
        <dbReference type="Rhea" id="RHEA-COMP:10001"/>
        <dbReference type="Rhea" id="RHEA-COMP:10162"/>
        <dbReference type="Rhea" id="RHEA-COMP:10485"/>
        <dbReference type="ChEBI" id="CHEBI:17319"/>
        <dbReference type="ChEBI" id="CHEBI:33737"/>
        <dbReference type="ChEBI" id="CHEBI:33738"/>
        <dbReference type="ChEBI" id="CHEBI:57844"/>
        <dbReference type="ChEBI" id="CHEBI:57856"/>
        <dbReference type="ChEBI" id="CHEBI:59789"/>
        <dbReference type="ChEBI" id="CHEBI:74411"/>
        <dbReference type="ChEBI" id="CHEBI:74497"/>
        <dbReference type="EC" id="2.1.1.192"/>
    </reaction>
</comment>
<comment type="cofactor">
    <cofactor evidence="1">
        <name>[4Fe-4S] cluster</name>
        <dbReference type="ChEBI" id="CHEBI:49883"/>
    </cofactor>
    <text evidence="1">Binds 1 [4Fe-4S] cluster. The cluster is coordinated with 3 cysteines and an exchangeable S-adenosyl-L-methionine.</text>
</comment>
<comment type="subcellular location">
    <subcellularLocation>
        <location evidence="1">Cytoplasm</location>
    </subcellularLocation>
</comment>
<comment type="miscellaneous">
    <text evidence="1">Reaction proceeds by a ping-pong mechanism involving intermediate methylation of a conserved cysteine residue.</text>
</comment>
<comment type="similarity">
    <text evidence="1">Belongs to the radical SAM superfamily. RlmN family.</text>
</comment>
<keyword id="KW-0004">4Fe-4S</keyword>
<keyword id="KW-0963">Cytoplasm</keyword>
<keyword id="KW-1015">Disulfide bond</keyword>
<keyword id="KW-0408">Iron</keyword>
<keyword id="KW-0411">Iron-sulfur</keyword>
<keyword id="KW-0479">Metal-binding</keyword>
<keyword id="KW-0489">Methyltransferase</keyword>
<keyword id="KW-1185">Reference proteome</keyword>
<keyword id="KW-0698">rRNA processing</keyword>
<keyword id="KW-0949">S-adenosyl-L-methionine</keyword>
<keyword id="KW-0808">Transferase</keyword>
<keyword id="KW-0819">tRNA processing</keyword>
<feature type="chain" id="PRO_0000350380" description="Dual-specificity RNA methyltransferase RlmN">
    <location>
        <begin position="1"/>
        <end position="398"/>
    </location>
</feature>
<feature type="domain" description="Radical SAM core" evidence="2">
    <location>
        <begin position="106"/>
        <end position="345"/>
    </location>
</feature>
<feature type="active site" description="Proton acceptor" evidence="1">
    <location>
        <position position="100"/>
    </location>
</feature>
<feature type="active site" description="S-methylcysteine intermediate" evidence="1">
    <location>
        <position position="350"/>
    </location>
</feature>
<feature type="binding site" evidence="1">
    <location>
        <position position="120"/>
    </location>
    <ligand>
        <name>[4Fe-4S] cluster</name>
        <dbReference type="ChEBI" id="CHEBI:49883"/>
        <note>4Fe-4S-S-AdoMet</note>
    </ligand>
</feature>
<feature type="binding site" evidence="1">
    <location>
        <position position="124"/>
    </location>
    <ligand>
        <name>[4Fe-4S] cluster</name>
        <dbReference type="ChEBI" id="CHEBI:49883"/>
        <note>4Fe-4S-S-AdoMet</note>
    </ligand>
</feature>
<feature type="binding site" evidence="1">
    <location>
        <position position="127"/>
    </location>
    <ligand>
        <name>[4Fe-4S] cluster</name>
        <dbReference type="ChEBI" id="CHEBI:49883"/>
        <note>4Fe-4S-S-AdoMet</note>
    </ligand>
</feature>
<feature type="binding site" evidence="1">
    <location>
        <begin position="174"/>
        <end position="175"/>
    </location>
    <ligand>
        <name>S-adenosyl-L-methionine</name>
        <dbReference type="ChEBI" id="CHEBI:59789"/>
    </ligand>
</feature>
<feature type="binding site" evidence="1">
    <location>
        <position position="206"/>
    </location>
    <ligand>
        <name>S-adenosyl-L-methionine</name>
        <dbReference type="ChEBI" id="CHEBI:59789"/>
    </ligand>
</feature>
<feature type="binding site" evidence="1">
    <location>
        <begin position="228"/>
        <end position="230"/>
    </location>
    <ligand>
        <name>S-adenosyl-L-methionine</name>
        <dbReference type="ChEBI" id="CHEBI:59789"/>
    </ligand>
</feature>
<feature type="binding site" evidence="1">
    <location>
        <position position="307"/>
    </location>
    <ligand>
        <name>S-adenosyl-L-methionine</name>
        <dbReference type="ChEBI" id="CHEBI:59789"/>
    </ligand>
</feature>
<feature type="disulfide bond" description="(transient)" evidence="1">
    <location>
        <begin position="113"/>
        <end position="350"/>
    </location>
</feature>
<protein>
    <recommendedName>
        <fullName evidence="1">Dual-specificity RNA methyltransferase RlmN</fullName>
        <ecNumber evidence="1">2.1.1.192</ecNumber>
    </recommendedName>
    <alternativeName>
        <fullName evidence="1">23S rRNA (adenine(2503)-C(2))-methyltransferase</fullName>
    </alternativeName>
    <alternativeName>
        <fullName evidence="1">23S rRNA m2A2503 methyltransferase</fullName>
    </alternativeName>
    <alternativeName>
        <fullName evidence="1">Ribosomal RNA large subunit methyltransferase N</fullName>
    </alternativeName>
    <alternativeName>
        <fullName evidence="1">tRNA (adenine(37)-C(2))-methyltransferase</fullName>
    </alternativeName>
    <alternativeName>
        <fullName evidence="1">tRNA m2A37 methyltransferase</fullName>
    </alternativeName>
</protein>
<accession>Q21KT6</accession>
<name>RLMN_SACD2</name>
<sequence>MTVESTAAPAKVNLMGLSQAKLEAFFDSLGEKRFRATQVLKWIHQMGVTDFEQMTNISKPLRDKLSQVAEAVAPEVVNQWDSSDGTRKFLIRVGGGNAVETVYIPDGDRGTLCVSSQVGCSLDCSFCATGKQGFNRDLTAAEIIGQVWQAAKSFNQFGVGAQRKITNVVMMGMGEPLLNFDNVVDSMNLMMHDNCYGLSKRRVTLSTSGVVPALDKLGEYTDACLAISLHAPNNALRNELVPINKKYPIEMLLASAKRYIDGLPDVRRKMTIEYTLIDQVNDRPEHAHELAELLKDIPVKINLIPFNPFNLSNYKRVSNNALRRFQQILIDAGYTTTVRTTRGDDIDAACGQLAGQVNDRTKRSQRYKIDKNALDASNADIIPVKLVDEADVSITFNG</sequence>